<reference key="1">
    <citation type="journal article" date="2000" name="J. Biol. Chem.">
        <title>Identification and characterization of HAOX1, HAOX2, and HAOX3, three human peroxisomal 2-hydroxy acid oxidases.</title>
        <authorList>
            <person name="Jones J.M."/>
            <person name="Morrell J.C."/>
            <person name="Gould S.J."/>
        </authorList>
    </citation>
    <scope>NUCLEOTIDE SEQUENCE [MRNA]</scope>
    <scope>FUNCTION</scope>
    <scope>CATALYTIC ACTIVITY</scope>
    <scope>SUBCELLULAR LOCATION</scope>
    <scope>PATHWAY</scope>
</reference>
<reference key="2">
    <citation type="submission" date="2000-05" db="EMBL/GenBank/DDBJ databases">
        <title>Mus musculus long-chain L-2-hydroxy acid oxidase.</title>
        <authorList>
            <person name="Spielbauer B."/>
            <person name="Conzelmann E."/>
        </authorList>
    </citation>
    <scope>NUCLEOTIDE SEQUENCE [MRNA]</scope>
</reference>
<reference key="3">
    <citation type="submission" date="1999-12" db="EMBL/GenBank/DDBJ databases">
        <title>Search for PTS1-containing protein in mammals.</title>
        <authorList>
            <person name="Van Veldhoven P.P."/>
        </authorList>
    </citation>
    <scope>NUCLEOTIDE SEQUENCE [MRNA]</scope>
</reference>
<reference key="4">
    <citation type="journal article" date="2005" name="Science">
        <title>The transcriptional landscape of the mammalian genome.</title>
        <authorList>
            <person name="Carninci P."/>
            <person name="Kasukawa T."/>
            <person name="Katayama S."/>
            <person name="Gough J."/>
            <person name="Frith M.C."/>
            <person name="Maeda N."/>
            <person name="Oyama R."/>
            <person name="Ravasi T."/>
            <person name="Lenhard B."/>
            <person name="Wells C."/>
            <person name="Kodzius R."/>
            <person name="Shimokawa K."/>
            <person name="Bajic V.B."/>
            <person name="Brenner S.E."/>
            <person name="Batalov S."/>
            <person name="Forrest A.R."/>
            <person name="Zavolan M."/>
            <person name="Davis M.J."/>
            <person name="Wilming L.G."/>
            <person name="Aidinis V."/>
            <person name="Allen J.E."/>
            <person name="Ambesi-Impiombato A."/>
            <person name="Apweiler R."/>
            <person name="Aturaliya R.N."/>
            <person name="Bailey T.L."/>
            <person name="Bansal M."/>
            <person name="Baxter L."/>
            <person name="Beisel K.W."/>
            <person name="Bersano T."/>
            <person name="Bono H."/>
            <person name="Chalk A.M."/>
            <person name="Chiu K.P."/>
            <person name="Choudhary V."/>
            <person name="Christoffels A."/>
            <person name="Clutterbuck D.R."/>
            <person name="Crowe M.L."/>
            <person name="Dalla E."/>
            <person name="Dalrymple B.P."/>
            <person name="de Bono B."/>
            <person name="Della Gatta G."/>
            <person name="di Bernardo D."/>
            <person name="Down T."/>
            <person name="Engstrom P."/>
            <person name="Fagiolini M."/>
            <person name="Faulkner G."/>
            <person name="Fletcher C.F."/>
            <person name="Fukushima T."/>
            <person name="Furuno M."/>
            <person name="Futaki S."/>
            <person name="Gariboldi M."/>
            <person name="Georgii-Hemming P."/>
            <person name="Gingeras T.R."/>
            <person name="Gojobori T."/>
            <person name="Green R.E."/>
            <person name="Gustincich S."/>
            <person name="Harbers M."/>
            <person name="Hayashi Y."/>
            <person name="Hensch T.K."/>
            <person name="Hirokawa N."/>
            <person name="Hill D."/>
            <person name="Huminiecki L."/>
            <person name="Iacono M."/>
            <person name="Ikeo K."/>
            <person name="Iwama A."/>
            <person name="Ishikawa T."/>
            <person name="Jakt M."/>
            <person name="Kanapin A."/>
            <person name="Katoh M."/>
            <person name="Kawasawa Y."/>
            <person name="Kelso J."/>
            <person name="Kitamura H."/>
            <person name="Kitano H."/>
            <person name="Kollias G."/>
            <person name="Krishnan S.P."/>
            <person name="Kruger A."/>
            <person name="Kummerfeld S.K."/>
            <person name="Kurochkin I.V."/>
            <person name="Lareau L.F."/>
            <person name="Lazarevic D."/>
            <person name="Lipovich L."/>
            <person name="Liu J."/>
            <person name="Liuni S."/>
            <person name="McWilliam S."/>
            <person name="Madan Babu M."/>
            <person name="Madera M."/>
            <person name="Marchionni L."/>
            <person name="Matsuda H."/>
            <person name="Matsuzawa S."/>
            <person name="Miki H."/>
            <person name="Mignone F."/>
            <person name="Miyake S."/>
            <person name="Morris K."/>
            <person name="Mottagui-Tabar S."/>
            <person name="Mulder N."/>
            <person name="Nakano N."/>
            <person name="Nakauchi H."/>
            <person name="Ng P."/>
            <person name="Nilsson R."/>
            <person name="Nishiguchi S."/>
            <person name="Nishikawa S."/>
            <person name="Nori F."/>
            <person name="Ohara O."/>
            <person name="Okazaki Y."/>
            <person name="Orlando V."/>
            <person name="Pang K.C."/>
            <person name="Pavan W.J."/>
            <person name="Pavesi G."/>
            <person name="Pesole G."/>
            <person name="Petrovsky N."/>
            <person name="Piazza S."/>
            <person name="Reed J."/>
            <person name="Reid J.F."/>
            <person name="Ring B.Z."/>
            <person name="Ringwald M."/>
            <person name="Rost B."/>
            <person name="Ruan Y."/>
            <person name="Salzberg S.L."/>
            <person name="Sandelin A."/>
            <person name="Schneider C."/>
            <person name="Schoenbach C."/>
            <person name="Sekiguchi K."/>
            <person name="Semple C.A."/>
            <person name="Seno S."/>
            <person name="Sessa L."/>
            <person name="Sheng Y."/>
            <person name="Shibata Y."/>
            <person name="Shimada H."/>
            <person name="Shimada K."/>
            <person name="Silva D."/>
            <person name="Sinclair B."/>
            <person name="Sperling S."/>
            <person name="Stupka E."/>
            <person name="Sugiura K."/>
            <person name="Sultana R."/>
            <person name="Takenaka Y."/>
            <person name="Taki K."/>
            <person name="Tammoja K."/>
            <person name="Tan S.L."/>
            <person name="Tang S."/>
            <person name="Taylor M.S."/>
            <person name="Tegner J."/>
            <person name="Teichmann S.A."/>
            <person name="Ueda H.R."/>
            <person name="van Nimwegen E."/>
            <person name="Verardo R."/>
            <person name="Wei C.L."/>
            <person name="Yagi K."/>
            <person name="Yamanishi H."/>
            <person name="Zabarovsky E."/>
            <person name="Zhu S."/>
            <person name="Zimmer A."/>
            <person name="Hide W."/>
            <person name="Bult C."/>
            <person name="Grimmond S.M."/>
            <person name="Teasdale R.D."/>
            <person name="Liu E.T."/>
            <person name="Brusic V."/>
            <person name="Quackenbush J."/>
            <person name="Wahlestedt C."/>
            <person name="Mattick J.S."/>
            <person name="Hume D.A."/>
            <person name="Kai C."/>
            <person name="Sasaki D."/>
            <person name="Tomaru Y."/>
            <person name="Fukuda S."/>
            <person name="Kanamori-Katayama M."/>
            <person name="Suzuki M."/>
            <person name="Aoki J."/>
            <person name="Arakawa T."/>
            <person name="Iida J."/>
            <person name="Imamura K."/>
            <person name="Itoh M."/>
            <person name="Kato T."/>
            <person name="Kawaji H."/>
            <person name="Kawagashira N."/>
            <person name="Kawashima T."/>
            <person name="Kojima M."/>
            <person name="Kondo S."/>
            <person name="Konno H."/>
            <person name="Nakano K."/>
            <person name="Ninomiya N."/>
            <person name="Nishio T."/>
            <person name="Okada M."/>
            <person name="Plessy C."/>
            <person name="Shibata K."/>
            <person name="Shiraki T."/>
            <person name="Suzuki S."/>
            <person name="Tagami M."/>
            <person name="Waki K."/>
            <person name="Watahiki A."/>
            <person name="Okamura-Oho Y."/>
            <person name="Suzuki H."/>
            <person name="Kawai J."/>
            <person name="Hayashizaki Y."/>
        </authorList>
    </citation>
    <scope>NUCLEOTIDE SEQUENCE [LARGE SCALE MRNA]</scope>
    <source>
        <strain>C57BL/6J</strain>
        <tissue>Cecum</tissue>
    </source>
</reference>
<reference key="5">
    <citation type="journal article" date="2010" name="Cell">
        <title>A tissue-specific atlas of mouse protein phosphorylation and expression.</title>
        <authorList>
            <person name="Huttlin E.L."/>
            <person name="Jedrychowski M.P."/>
            <person name="Elias J.E."/>
            <person name="Goswami T."/>
            <person name="Rad R."/>
            <person name="Beausoleil S.A."/>
            <person name="Villen J."/>
            <person name="Haas W."/>
            <person name="Sowa M.E."/>
            <person name="Gygi S.P."/>
        </authorList>
    </citation>
    <scope>PHOSPHORYLATION [LARGE SCALE ANALYSIS] AT SER-171</scope>
    <scope>IDENTIFICATION BY MASS SPECTROMETRY [LARGE SCALE ANALYSIS]</scope>
    <source>
        <tissue>Kidney</tissue>
        <tissue>Liver</tissue>
    </source>
</reference>
<accession>Q9NYQ2</accession>
<accession>Q9JHS7</accession>
<accession>Q9JI00</accession>
<sequence>MSLLCLADFKAQAQKQLSKTSWDFIEGEADDGITYNDNLAAFRRIRLRPRYLRDVSKIDTRTTIQGQEINAPICISPTAFHSIAWADGEKSTAKAAQKANICYVISSYASYTVEDIVAAAPGGLHWFQLYVQPDWDINKQMVQRIEALGFKALVVTVDAPVLGNRRGNKRSLLDLEANIKLKDLRSPGESKSGLPTPLSMPSSSSCWNDLPLLQSMTRLPIILKGILTKEDAELAVKHNIRGIIVSNHGGRQLDEVPASIDALREVVAAVNGKIEVYMDGGVRTGNDVLKALALGARCIFLGRPIIWGLACKGEDGVKEVLDILKEELHTCMALSGCRSVAEISPDLIQFSRL</sequence>
<keyword id="KW-0276">Fatty acid metabolism</keyword>
<keyword id="KW-0285">Flavoprotein</keyword>
<keyword id="KW-0288">FMN</keyword>
<keyword id="KW-0443">Lipid metabolism</keyword>
<keyword id="KW-0560">Oxidoreductase</keyword>
<keyword id="KW-0576">Peroxisome</keyword>
<keyword id="KW-0597">Phosphoprotein</keyword>
<keyword id="KW-1185">Reference proteome</keyword>
<protein>
    <recommendedName>
        <fullName>2-Hydroxyacid oxidase 2</fullName>
        <shortName>HAOX2</shortName>
        <ecNumber evidence="7">1.1.3.15</ecNumber>
    </recommendedName>
    <alternativeName>
        <fullName>(S)-2-hydroxy-acid oxidase, peroxisomal</fullName>
    </alternativeName>
    <alternativeName>
        <fullName>Medium chain alpha-hydroxy acid oxidase</fullName>
    </alternativeName>
    <alternativeName>
        <fullName>Medium-chain L-2-hydroxy acid oxidase</fullName>
    </alternativeName>
</protein>
<comment type="function">
    <text evidence="5">Oxidase that catalyzes the oxidation of medium chain hydroxyacids such as 2-hydroxyoctanoate, to the correspondong 2-oxoacids. Its role in the oxidation of 2-hydroxy fatty acids may contribute to the general pathway of fatty acid alpha-oxidation. Active in vitro with the artificial electron acceptor 2,6-dichlorophenolindophenol (DCIP), but O2 is believed to be the physiological electron acceptor, leading to the production of H2O2. Is not active on glycolate, glyoxylate, L-lactate, 2-hydroxybutanoate and 2-hydroxyhexadecanoate.</text>
</comment>
<comment type="catalytic activity">
    <reaction evidence="7">
        <text>a (2S)-2-hydroxycarboxylate + O2 = a 2-oxocarboxylate + H2O2</text>
        <dbReference type="Rhea" id="RHEA:16789"/>
        <dbReference type="ChEBI" id="CHEBI:15379"/>
        <dbReference type="ChEBI" id="CHEBI:16240"/>
        <dbReference type="ChEBI" id="CHEBI:35179"/>
        <dbReference type="ChEBI" id="CHEBI:58123"/>
        <dbReference type="EC" id="1.1.3.15"/>
    </reaction>
    <physiologicalReaction direction="left-to-right" evidence="7">
        <dbReference type="Rhea" id="RHEA:16790"/>
    </physiologicalReaction>
</comment>
<comment type="catalytic activity">
    <reaction evidence="7">
        <text>2-hydroxyoctanoate + O2 = 2-oxooctanoate + H2O2</text>
        <dbReference type="Rhea" id="RHEA:67940"/>
        <dbReference type="ChEBI" id="CHEBI:15379"/>
        <dbReference type="ChEBI" id="CHEBI:16240"/>
        <dbReference type="ChEBI" id="CHEBI:133514"/>
        <dbReference type="ChEBI" id="CHEBI:176689"/>
    </reaction>
    <physiologicalReaction direction="left-to-right" evidence="7">
        <dbReference type="Rhea" id="RHEA:67941"/>
    </physiologicalReaction>
</comment>
<comment type="cofactor">
    <cofactor evidence="2">
        <name>FMN</name>
        <dbReference type="ChEBI" id="CHEBI:58210"/>
    </cofactor>
</comment>
<comment type="pathway">
    <text evidence="7">Lipid metabolism; fatty acid metabolism.</text>
</comment>
<comment type="subunit">
    <text evidence="2">Homotetramer.</text>
</comment>
<comment type="subcellular location">
    <subcellularLocation>
        <location evidence="5">Peroxisome</location>
    </subcellularLocation>
</comment>
<comment type="tissue specificity">
    <text>Pancreas.</text>
</comment>
<comment type="similarity">
    <text evidence="4">Belongs to the FMN-dependent alpha-hydroxy acid dehydrogenase family.</text>
</comment>
<comment type="caution">
    <text evidence="7">Was originally thought to originate from human.</text>
</comment>
<proteinExistence type="evidence at protein level"/>
<feature type="chain" id="PRO_0000206321" description="2-Hydroxyacid oxidase 2">
    <location>
        <begin position="1"/>
        <end position="353"/>
    </location>
</feature>
<feature type="domain" description="FMN hydroxy acid dehydrogenase" evidence="4">
    <location>
        <begin position="2"/>
        <end position="353"/>
    </location>
</feature>
<feature type="short sequence motif" description="Microbody targeting signal" evidence="3">
    <location>
        <begin position="351"/>
        <end position="353"/>
    </location>
</feature>
<feature type="active site" description="Proton acceptor" evidence="4">
    <location>
        <position position="248"/>
    </location>
</feature>
<feature type="binding site" evidence="1">
    <location>
        <begin position="77"/>
        <end position="79"/>
    </location>
    <ligand>
        <name>FMN</name>
        <dbReference type="ChEBI" id="CHEBI:58210"/>
    </ligand>
</feature>
<feature type="binding site" evidence="1">
    <location>
        <position position="106"/>
    </location>
    <ligand>
        <name>FMN</name>
        <dbReference type="ChEBI" id="CHEBI:58210"/>
    </ligand>
</feature>
<feature type="binding site" evidence="1">
    <location>
        <position position="128"/>
    </location>
    <ligand>
        <name>FMN</name>
        <dbReference type="ChEBI" id="CHEBI:58210"/>
    </ligand>
</feature>
<feature type="binding site" evidence="4">
    <location>
        <position position="130"/>
    </location>
    <ligand>
        <name>a 2-oxocarboxylate</name>
        <dbReference type="ChEBI" id="CHEBI:35179"/>
    </ligand>
</feature>
<feature type="binding site" evidence="1">
    <location>
        <position position="156"/>
    </location>
    <ligand>
        <name>FMN</name>
        <dbReference type="ChEBI" id="CHEBI:58210"/>
    </ligand>
</feature>
<feature type="binding site" evidence="4">
    <location>
        <position position="165"/>
    </location>
    <ligand>
        <name>a 2-oxocarboxylate</name>
        <dbReference type="ChEBI" id="CHEBI:35179"/>
    </ligand>
</feature>
<feature type="binding site" evidence="1">
    <location>
        <position position="224"/>
    </location>
    <ligand>
        <name>FMN</name>
        <dbReference type="ChEBI" id="CHEBI:58210"/>
    </ligand>
</feature>
<feature type="binding site" evidence="4">
    <location>
        <position position="251"/>
    </location>
    <ligand>
        <name>a 2-oxocarboxylate</name>
        <dbReference type="ChEBI" id="CHEBI:35179"/>
    </ligand>
</feature>
<feature type="binding site" evidence="1">
    <location>
        <begin position="279"/>
        <end position="283"/>
    </location>
    <ligand>
        <name>FMN</name>
        <dbReference type="ChEBI" id="CHEBI:58210"/>
    </ligand>
</feature>
<feature type="binding site" evidence="1">
    <location>
        <begin position="302"/>
        <end position="303"/>
    </location>
    <ligand>
        <name>FMN</name>
        <dbReference type="ChEBI" id="CHEBI:58210"/>
    </ligand>
</feature>
<feature type="modified residue" description="Phosphoserine" evidence="8">
    <location>
        <position position="171"/>
    </location>
</feature>
<feature type="sequence conflict" description="In Ref. 3; CAB96380." evidence="6" ref="3">
    <original>N</original>
    <variation>H</variation>
    <location>
        <position position="164"/>
    </location>
</feature>
<organism>
    <name type="scientific">Mus musculus</name>
    <name type="common">Mouse</name>
    <dbReference type="NCBI Taxonomy" id="10090"/>
    <lineage>
        <taxon>Eukaryota</taxon>
        <taxon>Metazoa</taxon>
        <taxon>Chordata</taxon>
        <taxon>Craniata</taxon>
        <taxon>Vertebrata</taxon>
        <taxon>Euteleostomi</taxon>
        <taxon>Mammalia</taxon>
        <taxon>Eutheria</taxon>
        <taxon>Euarchontoglires</taxon>
        <taxon>Glires</taxon>
        <taxon>Rodentia</taxon>
        <taxon>Myomorpha</taxon>
        <taxon>Muroidea</taxon>
        <taxon>Muridae</taxon>
        <taxon>Murinae</taxon>
        <taxon>Mus</taxon>
        <taxon>Mus</taxon>
    </lineage>
</organism>
<dbReference type="EC" id="1.1.3.15" evidence="7"/>
<dbReference type="EMBL" id="AF231918">
    <property type="protein sequence ID" value="AAF40201.1"/>
    <property type="molecule type" value="mRNA"/>
</dbReference>
<dbReference type="EMBL" id="AF272947">
    <property type="protein sequence ID" value="AAF81795.1"/>
    <property type="molecule type" value="mRNA"/>
</dbReference>
<dbReference type="EMBL" id="AJ251820">
    <property type="protein sequence ID" value="CAB96380.1"/>
    <property type="molecule type" value="mRNA"/>
</dbReference>
<dbReference type="EMBL" id="AK078908">
    <property type="protein sequence ID" value="BAC37452.1"/>
    <property type="molecule type" value="mRNA"/>
</dbReference>
<dbReference type="CCDS" id="CCDS17671.1"/>
<dbReference type="RefSeq" id="NP_062418.3">
    <property type="nucleotide sequence ID" value="NM_019545.4"/>
</dbReference>
<dbReference type="RefSeq" id="XP_011238471.1">
    <property type="nucleotide sequence ID" value="XM_011240169.3"/>
</dbReference>
<dbReference type="SMR" id="Q9NYQ2"/>
<dbReference type="FunCoup" id="Q9NYQ2">
    <property type="interactions" value="427"/>
</dbReference>
<dbReference type="STRING" id="10090.ENSMUSP00000029464"/>
<dbReference type="iPTMnet" id="Q9NYQ2"/>
<dbReference type="PhosphoSitePlus" id="Q9NYQ2"/>
<dbReference type="jPOST" id="Q9NYQ2"/>
<dbReference type="PaxDb" id="10090-ENSMUSP00000029464"/>
<dbReference type="ProteomicsDB" id="269764"/>
<dbReference type="Antibodypedia" id="33905">
    <property type="antibodies" value="116 antibodies from 23 providers"/>
</dbReference>
<dbReference type="DNASU" id="56185"/>
<dbReference type="Ensembl" id="ENSMUST00000029464.9">
    <property type="protein sequence ID" value="ENSMUSP00000029464.8"/>
    <property type="gene ID" value="ENSMUSG00000027870.9"/>
</dbReference>
<dbReference type="GeneID" id="56185"/>
<dbReference type="KEGG" id="mmu:56185"/>
<dbReference type="UCSC" id="uc008qqj.2">
    <property type="organism name" value="mouse"/>
</dbReference>
<dbReference type="AGR" id="MGI:96012"/>
<dbReference type="CTD" id="51179"/>
<dbReference type="MGI" id="MGI:96012">
    <property type="gene designation" value="Hao2"/>
</dbReference>
<dbReference type="VEuPathDB" id="HostDB:ENSMUSG00000027870"/>
<dbReference type="eggNOG" id="KOG0538">
    <property type="taxonomic scope" value="Eukaryota"/>
</dbReference>
<dbReference type="GeneTree" id="ENSGT00390000018717"/>
<dbReference type="HOGENOM" id="CLU_020639_6_1_1"/>
<dbReference type="InParanoid" id="Q9NYQ2"/>
<dbReference type="OMA" id="WADFQYE"/>
<dbReference type="OrthoDB" id="25826at2759"/>
<dbReference type="PhylomeDB" id="Q9NYQ2"/>
<dbReference type="TreeFam" id="TF313363"/>
<dbReference type="BRENDA" id="1.1.3.15">
    <property type="organism ID" value="3474"/>
</dbReference>
<dbReference type="Reactome" id="R-MMU-390918">
    <property type="pathway name" value="Peroxisomal lipid metabolism"/>
</dbReference>
<dbReference type="Reactome" id="R-MMU-9033241">
    <property type="pathway name" value="Peroxisomal protein import"/>
</dbReference>
<dbReference type="UniPathway" id="UPA00199"/>
<dbReference type="BioGRID-ORCS" id="56185">
    <property type="hits" value="1 hit in 80 CRISPR screens"/>
</dbReference>
<dbReference type="ChiTaRS" id="Hao2">
    <property type="organism name" value="mouse"/>
</dbReference>
<dbReference type="PRO" id="PR:Q9NYQ2"/>
<dbReference type="Proteomes" id="UP000000589">
    <property type="component" value="Chromosome 3"/>
</dbReference>
<dbReference type="RNAct" id="Q9NYQ2">
    <property type="molecule type" value="protein"/>
</dbReference>
<dbReference type="Bgee" id="ENSMUSG00000027870">
    <property type="expression patterns" value="Expressed in left colon and 47 other cell types or tissues"/>
</dbReference>
<dbReference type="GO" id="GO:0005739">
    <property type="term" value="C:mitochondrion"/>
    <property type="evidence" value="ECO:0007005"/>
    <property type="project" value="MGI"/>
</dbReference>
<dbReference type="GO" id="GO:0005782">
    <property type="term" value="C:peroxisomal matrix"/>
    <property type="evidence" value="ECO:0007669"/>
    <property type="project" value="Ensembl"/>
</dbReference>
<dbReference type="GO" id="GO:0003973">
    <property type="term" value="F:(S)-2-hydroxy-acid oxidase activity"/>
    <property type="evidence" value="ECO:0007669"/>
    <property type="project" value="UniProtKB-EC"/>
</dbReference>
<dbReference type="GO" id="GO:0010181">
    <property type="term" value="F:FMN binding"/>
    <property type="evidence" value="ECO:0007669"/>
    <property type="project" value="InterPro"/>
</dbReference>
<dbReference type="GO" id="GO:0019395">
    <property type="term" value="P:fatty acid oxidation"/>
    <property type="evidence" value="ECO:0007669"/>
    <property type="project" value="Ensembl"/>
</dbReference>
<dbReference type="CDD" id="cd02809">
    <property type="entry name" value="alpha_hydroxyacid_oxid_FMN"/>
    <property type="match status" value="1"/>
</dbReference>
<dbReference type="FunFam" id="3.20.20.70:FF:000056">
    <property type="entry name" value="hydroxyacid oxidase 2"/>
    <property type="match status" value="1"/>
</dbReference>
<dbReference type="Gene3D" id="3.20.20.70">
    <property type="entry name" value="Aldolase class I"/>
    <property type="match status" value="1"/>
</dbReference>
<dbReference type="InterPro" id="IPR013785">
    <property type="entry name" value="Aldolase_TIM"/>
</dbReference>
<dbReference type="InterPro" id="IPR012133">
    <property type="entry name" value="Alpha-hydoxy_acid_DH_FMN"/>
</dbReference>
<dbReference type="InterPro" id="IPR000262">
    <property type="entry name" value="FMN-dep_DH"/>
</dbReference>
<dbReference type="InterPro" id="IPR037396">
    <property type="entry name" value="FMN_HAD"/>
</dbReference>
<dbReference type="InterPro" id="IPR008259">
    <property type="entry name" value="FMN_hydac_DH_AS"/>
</dbReference>
<dbReference type="PANTHER" id="PTHR10578:SF149">
    <property type="entry name" value="2-HYDROXYACID OXIDASE 2"/>
    <property type="match status" value="1"/>
</dbReference>
<dbReference type="PANTHER" id="PTHR10578">
    <property type="entry name" value="S -2-HYDROXY-ACID OXIDASE-RELATED"/>
    <property type="match status" value="1"/>
</dbReference>
<dbReference type="Pfam" id="PF01070">
    <property type="entry name" value="FMN_dh"/>
    <property type="match status" value="1"/>
</dbReference>
<dbReference type="PIRSF" id="PIRSF000138">
    <property type="entry name" value="Al-hdrx_acd_dh"/>
    <property type="match status" value="1"/>
</dbReference>
<dbReference type="SUPFAM" id="SSF51395">
    <property type="entry name" value="FMN-linked oxidoreductases"/>
    <property type="match status" value="1"/>
</dbReference>
<dbReference type="PROSITE" id="PS00557">
    <property type="entry name" value="FMN_HYDROXY_ACID_DH_1"/>
    <property type="match status" value="1"/>
</dbReference>
<dbReference type="PROSITE" id="PS51349">
    <property type="entry name" value="FMN_HYDROXY_ACID_DH_2"/>
    <property type="match status" value="1"/>
</dbReference>
<evidence type="ECO:0000250" key="1">
    <source>
        <dbReference type="UniProtKB" id="Q07523"/>
    </source>
</evidence>
<evidence type="ECO:0000250" key="2">
    <source>
        <dbReference type="UniProtKB" id="Q9UJM8"/>
    </source>
</evidence>
<evidence type="ECO:0000255" key="3"/>
<evidence type="ECO:0000255" key="4">
    <source>
        <dbReference type="PROSITE-ProRule" id="PRU00683"/>
    </source>
</evidence>
<evidence type="ECO:0000269" key="5">
    <source>
    </source>
</evidence>
<evidence type="ECO:0000305" key="6"/>
<evidence type="ECO:0000305" key="7">
    <source>
    </source>
</evidence>
<evidence type="ECO:0007744" key="8">
    <source>
    </source>
</evidence>
<name>HAOX2_MOUSE</name>
<gene>
    <name type="primary">Hao2</name>
    <name type="synonym">Hao3</name>
    <name type="synonym">Haox2</name>
</gene>